<proteinExistence type="inferred from homology"/>
<accession>B2S6U9</accession>
<comment type="function">
    <text evidence="1">Small subunit of the glutamine-dependent carbamoyl phosphate synthetase (CPSase). CPSase catalyzes the formation of carbamoyl phosphate from the ammonia moiety of glutamine, carbonate, and phosphate donated by ATP, constituting the first step of 2 biosynthetic pathways, one leading to arginine and/or urea and the other to pyrimidine nucleotides. The small subunit (glutamine amidotransferase) binds and cleaves glutamine to supply the large subunit with the substrate ammonia.</text>
</comment>
<comment type="catalytic activity">
    <reaction evidence="1">
        <text>hydrogencarbonate + L-glutamine + 2 ATP + H2O = carbamoyl phosphate + L-glutamate + 2 ADP + phosphate + 2 H(+)</text>
        <dbReference type="Rhea" id="RHEA:18633"/>
        <dbReference type="ChEBI" id="CHEBI:15377"/>
        <dbReference type="ChEBI" id="CHEBI:15378"/>
        <dbReference type="ChEBI" id="CHEBI:17544"/>
        <dbReference type="ChEBI" id="CHEBI:29985"/>
        <dbReference type="ChEBI" id="CHEBI:30616"/>
        <dbReference type="ChEBI" id="CHEBI:43474"/>
        <dbReference type="ChEBI" id="CHEBI:58228"/>
        <dbReference type="ChEBI" id="CHEBI:58359"/>
        <dbReference type="ChEBI" id="CHEBI:456216"/>
        <dbReference type="EC" id="6.3.5.5"/>
    </reaction>
</comment>
<comment type="catalytic activity">
    <molecule>Carbamoyl phosphate synthase small chain</molecule>
    <reaction evidence="1">
        <text>L-glutamine + H2O = L-glutamate + NH4(+)</text>
        <dbReference type="Rhea" id="RHEA:15889"/>
        <dbReference type="ChEBI" id="CHEBI:15377"/>
        <dbReference type="ChEBI" id="CHEBI:28938"/>
        <dbReference type="ChEBI" id="CHEBI:29985"/>
        <dbReference type="ChEBI" id="CHEBI:58359"/>
    </reaction>
</comment>
<comment type="pathway">
    <text evidence="1">Amino-acid biosynthesis; L-arginine biosynthesis; carbamoyl phosphate from bicarbonate: step 1/1.</text>
</comment>
<comment type="pathway">
    <text evidence="1">Pyrimidine metabolism; UMP biosynthesis via de novo pathway; (S)-dihydroorotate from bicarbonate: step 1/3.</text>
</comment>
<comment type="subunit">
    <text evidence="1">Composed of two chains; the small (or glutamine) chain promotes the hydrolysis of glutamine to ammonia, which is used by the large (or ammonia) chain to synthesize carbamoyl phosphate. Tetramer of heterodimers (alpha,beta)4.</text>
</comment>
<comment type="similarity">
    <text evidence="1">Belongs to the CarA family.</text>
</comment>
<organism>
    <name type="scientific">Brucella abortus (strain S19)</name>
    <dbReference type="NCBI Taxonomy" id="430066"/>
    <lineage>
        <taxon>Bacteria</taxon>
        <taxon>Pseudomonadati</taxon>
        <taxon>Pseudomonadota</taxon>
        <taxon>Alphaproteobacteria</taxon>
        <taxon>Hyphomicrobiales</taxon>
        <taxon>Brucellaceae</taxon>
        <taxon>Brucella/Ochrobactrum group</taxon>
        <taxon>Brucella</taxon>
    </lineage>
</organism>
<sequence length="407" mass="43536">MTETTPKTAPWTVQKRTAVLVLADGTVIEGKGLGATGAVEAEVVFNTALTGYEEILTDPSYAGQIVTFTFPHIGNVGANAEDIEDLTPANRHGAVGAIFKADITAPSNFRAAKDLDSWLKHRGIIALAGIDTRALTALIRERGAQNAVIAHDPNGNFDLDALKARAANWCGLENLDLAKDVTIGQSLVWKELPWTLQDGYGEQDAPQYHVVALDFGVKRNILRLLTGLGAKVTVLPATATAEDVLAHNPDGVFLSNGPGDPAATGEYAVPTIGKLVETGIPLFGICLGHQMLALALGGRTEKMHQGHHGANHPVKDYTTGKVEIVSMNHGFAVDSDSLPENVEETHVSLFDGTNCGLRVVGKPVFSVQHHPEASPGPQDSHYLFRRFINLIRERKGQAPLPEREQAA</sequence>
<evidence type="ECO:0000255" key="1">
    <source>
        <dbReference type="HAMAP-Rule" id="MF_01209"/>
    </source>
</evidence>
<gene>
    <name evidence="1" type="primary">carA</name>
    <name type="ordered locus">BAbS19_I14030</name>
</gene>
<protein>
    <recommendedName>
        <fullName evidence="1">Carbamoyl phosphate synthase small chain</fullName>
        <ecNumber evidence="1">6.3.5.5</ecNumber>
    </recommendedName>
    <alternativeName>
        <fullName evidence="1">Carbamoyl phosphate synthetase glutamine chain</fullName>
    </alternativeName>
</protein>
<reference key="1">
    <citation type="journal article" date="2008" name="PLoS ONE">
        <title>Genome sequence of Brucella abortus vaccine strain S19 compared to virulent strains yields candidate virulence genes.</title>
        <authorList>
            <person name="Crasta O.R."/>
            <person name="Folkerts O."/>
            <person name="Fei Z."/>
            <person name="Mane S.P."/>
            <person name="Evans C."/>
            <person name="Martino-Catt S."/>
            <person name="Bricker B."/>
            <person name="Yu G."/>
            <person name="Du L."/>
            <person name="Sobral B.W."/>
        </authorList>
    </citation>
    <scope>NUCLEOTIDE SEQUENCE [LARGE SCALE GENOMIC DNA]</scope>
    <source>
        <strain>S19</strain>
    </source>
</reference>
<dbReference type="EC" id="6.3.5.5" evidence="1"/>
<dbReference type="EMBL" id="CP000887">
    <property type="protein sequence ID" value="ACD72896.1"/>
    <property type="molecule type" value="Genomic_DNA"/>
</dbReference>
<dbReference type="RefSeq" id="WP_002964590.1">
    <property type="nucleotide sequence ID" value="NC_010742.1"/>
</dbReference>
<dbReference type="SMR" id="B2S6U9"/>
<dbReference type="MEROPS" id="C26.954"/>
<dbReference type="GeneID" id="93016227"/>
<dbReference type="KEGG" id="bmc:BAbS19_I14030"/>
<dbReference type="HOGENOM" id="CLU_035901_2_2_5"/>
<dbReference type="UniPathway" id="UPA00068">
    <property type="reaction ID" value="UER00171"/>
</dbReference>
<dbReference type="UniPathway" id="UPA00070">
    <property type="reaction ID" value="UER00115"/>
</dbReference>
<dbReference type="Proteomes" id="UP000002565">
    <property type="component" value="Chromosome 1"/>
</dbReference>
<dbReference type="GO" id="GO:0005524">
    <property type="term" value="F:ATP binding"/>
    <property type="evidence" value="ECO:0007669"/>
    <property type="project" value="UniProtKB-UniRule"/>
</dbReference>
<dbReference type="GO" id="GO:0004088">
    <property type="term" value="F:carbamoyl-phosphate synthase (glutamine-hydrolyzing) activity"/>
    <property type="evidence" value="ECO:0007669"/>
    <property type="project" value="UniProtKB-UniRule"/>
</dbReference>
<dbReference type="GO" id="GO:0004359">
    <property type="term" value="F:glutaminase activity"/>
    <property type="evidence" value="ECO:0007669"/>
    <property type="project" value="RHEA"/>
</dbReference>
<dbReference type="GO" id="GO:0006207">
    <property type="term" value="P:'de novo' pyrimidine nucleobase biosynthetic process"/>
    <property type="evidence" value="ECO:0007669"/>
    <property type="project" value="InterPro"/>
</dbReference>
<dbReference type="GO" id="GO:0044205">
    <property type="term" value="P:'de novo' UMP biosynthetic process"/>
    <property type="evidence" value="ECO:0007669"/>
    <property type="project" value="UniProtKB-UniRule"/>
</dbReference>
<dbReference type="GO" id="GO:0006541">
    <property type="term" value="P:glutamine metabolic process"/>
    <property type="evidence" value="ECO:0007669"/>
    <property type="project" value="InterPro"/>
</dbReference>
<dbReference type="GO" id="GO:0006526">
    <property type="term" value="P:L-arginine biosynthetic process"/>
    <property type="evidence" value="ECO:0007669"/>
    <property type="project" value="UniProtKB-UniRule"/>
</dbReference>
<dbReference type="CDD" id="cd01744">
    <property type="entry name" value="GATase1_CPSase"/>
    <property type="match status" value="1"/>
</dbReference>
<dbReference type="FunFam" id="3.50.30.20:FF:000001">
    <property type="entry name" value="Carbamoyl-phosphate synthase small chain"/>
    <property type="match status" value="1"/>
</dbReference>
<dbReference type="Gene3D" id="3.40.50.880">
    <property type="match status" value="1"/>
</dbReference>
<dbReference type="Gene3D" id="3.50.30.20">
    <property type="entry name" value="Carbamoyl-phosphate synthase small subunit, N-terminal domain"/>
    <property type="match status" value="1"/>
</dbReference>
<dbReference type="HAMAP" id="MF_01209">
    <property type="entry name" value="CPSase_S_chain"/>
    <property type="match status" value="1"/>
</dbReference>
<dbReference type="InterPro" id="IPR050472">
    <property type="entry name" value="Anth_synth/Amidotransfase"/>
</dbReference>
<dbReference type="InterPro" id="IPR006274">
    <property type="entry name" value="CarbamoylP_synth_ssu"/>
</dbReference>
<dbReference type="InterPro" id="IPR002474">
    <property type="entry name" value="CarbamoylP_synth_ssu_N"/>
</dbReference>
<dbReference type="InterPro" id="IPR036480">
    <property type="entry name" value="CarbP_synth_ssu_N_sf"/>
</dbReference>
<dbReference type="InterPro" id="IPR029062">
    <property type="entry name" value="Class_I_gatase-like"/>
</dbReference>
<dbReference type="InterPro" id="IPR035686">
    <property type="entry name" value="CPSase_GATase1"/>
</dbReference>
<dbReference type="InterPro" id="IPR017926">
    <property type="entry name" value="GATASE"/>
</dbReference>
<dbReference type="NCBIfam" id="TIGR01368">
    <property type="entry name" value="CPSaseIIsmall"/>
    <property type="match status" value="1"/>
</dbReference>
<dbReference type="NCBIfam" id="NF009475">
    <property type="entry name" value="PRK12838.1"/>
    <property type="match status" value="1"/>
</dbReference>
<dbReference type="PANTHER" id="PTHR43418:SF7">
    <property type="entry name" value="CARBAMOYL-PHOSPHATE SYNTHASE SMALL CHAIN"/>
    <property type="match status" value="1"/>
</dbReference>
<dbReference type="PANTHER" id="PTHR43418">
    <property type="entry name" value="MULTIFUNCTIONAL TRYPTOPHAN BIOSYNTHESIS PROTEIN-RELATED"/>
    <property type="match status" value="1"/>
</dbReference>
<dbReference type="Pfam" id="PF00988">
    <property type="entry name" value="CPSase_sm_chain"/>
    <property type="match status" value="1"/>
</dbReference>
<dbReference type="Pfam" id="PF00117">
    <property type="entry name" value="GATase"/>
    <property type="match status" value="1"/>
</dbReference>
<dbReference type="PRINTS" id="PR00097">
    <property type="entry name" value="ANTSNTHASEII"/>
</dbReference>
<dbReference type="PRINTS" id="PR00099">
    <property type="entry name" value="CPSGATASE"/>
</dbReference>
<dbReference type="PRINTS" id="PR00096">
    <property type="entry name" value="GATASE"/>
</dbReference>
<dbReference type="SMART" id="SM01097">
    <property type="entry name" value="CPSase_sm_chain"/>
    <property type="match status" value="1"/>
</dbReference>
<dbReference type="SUPFAM" id="SSF52021">
    <property type="entry name" value="Carbamoyl phosphate synthetase, small subunit N-terminal domain"/>
    <property type="match status" value="1"/>
</dbReference>
<dbReference type="SUPFAM" id="SSF52317">
    <property type="entry name" value="Class I glutamine amidotransferase-like"/>
    <property type="match status" value="1"/>
</dbReference>
<dbReference type="PROSITE" id="PS51273">
    <property type="entry name" value="GATASE_TYPE_1"/>
    <property type="match status" value="1"/>
</dbReference>
<feature type="chain" id="PRO_1000138852" description="Carbamoyl phosphate synthase small chain">
    <location>
        <begin position="1"/>
        <end position="407"/>
    </location>
</feature>
<feature type="domain" description="Glutamine amidotransferase type-1" evidence="1">
    <location>
        <begin position="209"/>
        <end position="397"/>
    </location>
</feature>
<feature type="region of interest" description="CPSase" evidence="1">
    <location>
        <begin position="1"/>
        <end position="205"/>
    </location>
</feature>
<feature type="active site" description="Nucleophile" evidence="1">
    <location>
        <position position="286"/>
    </location>
</feature>
<feature type="active site" evidence="1">
    <location>
        <position position="370"/>
    </location>
</feature>
<feature type="active site" evidence="1">
    <location>
        <position position="372"/>
    </location>
</feature>
<feature type="binding site" evidence="1">
    <location>
        <position position="60"/>
    </location>
    <ligand>
        <name>L-glutamine</name>
        <dbReference type="ChEBI" id="CHEBI:58359"/>
    </ligand>
</feature>
<feature type="binding site" evidence="1">
    <location>
        <position position="257"/>
    </location>
    <ligand>
        <name>L-glutamine</name>
        <dbReference type="ChEBI" id="CHEBI:58359"/>
    </ligand>
</feature>
<feature type="binding site" evidence="1">
    <location>
        <position position="259"/>
    </location>
    <ligand>
        <name>L-glutamine</name>
        <dbReference type="ChEBI" id="CHEBI:58359"/>
    </ligand>
</feature>
<feature type="binding site" evidence="1">
    <location>
        <position position="287"/>
    </location>
    <ligand>
        <name>L-glutamine</name>
        <dbReference type="ChEBI" id="CHEBI:58359"/>
    </ligand>
</feature>
<feature type="binding site" evidence="1">
    <location>
        <position position="290"/>
    </location>
    <ligand>
        <name>L-glutamine</name>
        <dbReference type="ChEBI" id="CHEBI:58359"/>
    </ligand>
</feature>
<feature type="binding site" evidence="1">
    <location>
        <position position="328"/>
    </location>
    <ligand>
        <name>L-glutamine</name>
        <dbReference type="ChEBI" id="CHEBI:58359"/>
    </ligand>
</feature>
<feature type="binding site" evidence="1">
    <location>
        <position position="330"/>
    </location>
    <ligand>
        <name>L-glutamine</name>
        <dbReference type="ChEBI" id="CHEBI:58359"/>
    </ligand>
</feature>
<feature type="binding site" evidence="1">
    <location>
        <position position="331"/>
    </location>
    <ligand>
        <name>L-glutamine</name>
        <dbReference type="ChEBI" id="CHEBI:58359"/>
    </ligand>
</feature>
<keyword id="KW-0028">Amino-acid biosynthesis</keyword>
<keyword id="KW-0055">Arginine biosynthesis</keyword>
<keyword id="KW-0067">ATP-binding</keyword>
<keyword id="KW-0315">Glutamine amidotransferase</keyword>
<keyword id="KW-0436">Ligase</keyword>
<keyword id="KW-0547">Nucleotide-binding</keyword>
<keyword id="KW-0665">Pyrimidine biosynthesis</keyword>
<name>CARA_BRUA1</name>